<protein>
    <recommendedName>
        <fullName evidence="1">Small ribosomal subunit protein uS8</fullName>
    </recommendedName>
    <alternativeName>
        <fullName evidence="2">30S ribosomal protein S8</fullName>
    </alternativeName>
</protein>
<proteinExistence type="inferred from homology"/>
<gene>
    <name evidence="1" type="primary">rpsH</name>
    <name type="ordered locus">PSPA7_0851</name>
</gene>
<dbReference type="EMBL" id="CP000744">
    <property type="protein sequence ID" value="ABR82942.1"/>
    <property type="status" value="ALT_INIT"/>
    <property type="molecule type" value="Genomic_DNA"/>
</dbReference>
<dbReference type="RefSeq" id="WP_003093700.1">
    <property type="nucleotide sequence ID" value="NC_009656.1"/>
</dbReference>
<dbReference type="SMR" id="A6UZK2"/>
<dbReference type="GeneID" id="77219212"/>
<dbReference type="KEGG" id="pap:PSPA7_0851"/>
<dbReference type="HOGENOM" id="CLU_098428_0_0_6"/>
<dbReference type="Proteomes" id="UP000001582">
    <property type="component" value="Chromosome"/>
</dbReference>
<dbReference type="GO" id="GO:1990904">
    <property type="term" value="C:ribonucleoprotein complex"/>
    <property type="evidence" value="ECO:0007669"/>
    <property type="project" value="UniProtKB-KW"/>
</dbReference>
<dbReference type="GO" id="GO:0005840">
    <property type="term" value="C:ribosome"/>
    <property type="evidence" value="ECO:0007669"/>
    <property type="project" value="UniProtKB-KW"/>
</dbReference>
<dbReference type="GO" id="GO:0019843">
    <property type="term" value="F:rRNA binding"/>
    <property type="evidence" value="ECO:0007669"/>
    <property type="project" value="UniProtKB-UniRule"/>
</dbReference>
<dbReference type="GO" id="GO:0003735">
    <property type="term" value="F:structural constituent of ribosome"/>
    <property type="evidence" value="ECO:0007669"/>
    <property type="project" value="InterPro"/>
</dbReference>
<dbReference type="GO" id="GO:0006412">
    <property type="term" value="P:translation"/>
    <property type="evidence" value="ECO:0007669"/>
    <property type="project" value="UniProtKB-UniRule"/>
</dbReference>
<dbReference type="FunFam" id="3.30.1370.30:FF:000003">
    <property type="entry name" value="30S ribosomal protein S8"/>
    <property type="match status" value="1"/>
</dbReference>
<dbReference type="FunFam" id="3.30.1490.10:FF:000001">
    <property type="entry name" value="30S ribosomal protein S8"/>
    <property type="match status" value="1"/>
</dbReference>
<dbReference type="Gene3D" id="3.30.1370.30">
    <property type="match status" value="1"/>
</dbReference>
<dbReference type="Gene3D" id="3.30.1490.10">
    <property type="match status" value="1"/>
</dbReference>
<dbReference type="HAMAP" id="MF_01302_B">
    <property type="entry name" value="Ribosomal_uS8_B"/>
    <property type="match status" value="1"/>
</dbReference>
<dbReference type="InterPro" id="IPR000630">
    <property type="entry name" value="Ribosomal_uS8"/>
</dbReference>
<dbReference type="InterPro" id="IPR047863">
    <property type="entry name" value="Ribosomal_uS8_CS"/>
</dbReference>
<dbReference type="InterPro" id="IPR035987">
    <property type="entry name" value="Ribosomal_uS8_sf"/>
</dbReference>
<dbReference type="NCBIfam" id="NF001109">
    <property type="entry name" value="PRK00136.1"/>
    <property type="match status" value="1"/>
</dbReference>
<dbReference type="PANTHER" id="PTHR11758">
    <property type="entry name" value="40S RIBOSOMAL PROTEIN S15A"/>
    <property type="match status" value="1"/>
</dbReference>
<dbReference type="Pfam" id="PF00410">
    <property type="entry name" value="Ribosomal_S8"/>
    <property type="match status" value="1"/>
</dbReference>
<dbReference type="SUPFAM" id="SSF56047">
    <property type="entry name" value="Ribosomal protein S8"/>
    <property type="match status" value="1"/>
</dbReference>
<dbReference type="PROSITE" id="PS00053">
    <property type="entry name" value="RIBOSOMAL_S8"/>
    <property type="match status" value="1"/>
</dbReference>
<sequence length="130" mass="14171">MSMQDPLADMLTRIRNAQMAEKTVVSMPSSKLKAAVAKVLKDEGYIADFQISSEVKPQLSIELKYFEGKPVIEEVKRISRPGLRQYKSVEQLPKVRGGLGVSIVSTNKGVMTDRAARAAGVGGEVLCTVF</sequence>
<keyword id="KW-0687">Ribonucleoprotein</keyword>
<keyword id="KW-0689">Ribosomal protein</keyword>
<keyword id="KW-0694">RNA-binding</keyword>
<keyword id="KW-0699">rRNA-binding</keyword>
<reference key="1">
    <citation type="submission" date="2007-06" db="EMBL/GenBank/DDBJ databases">
        <authorList>
            <person name="Dodson R.J."/>
            <person name="Harkins D."/>
            <person name="Paulsen I.T."/>
        </authorList>
    </citation>
    <scope>NUCLEOTIDE SEQUENCE [LARGE SCALE GENOMIC DNA]</scope>
    <source>
        <strain>DSM 24068 / PA7</strain>
    </source>
</reference>
<accession>A6UZK2</accession>
<comment type="function">
    <text evidence="1">One of the primary rRNA binding proteins, it binds directly to 16S rRNA central domain where it helps coordinate assembly of the platform of the 30S subunit.</text>
</comment>
<comment type="subunit">
    <text evidence="1">Part of the 30S ribosomal subunit. Contacts proteins S5 and S12.</text>
</comment>
<comment type="similarity">
    <text evidence="1">Belongs to the universal ribosomal protein uS8 family.</text>
</comment>
<comment type="sequence caution" evidence="2">
    <conflict type="erroneous initiation">
        <sequence resource="EMBL-CDS" id="ABR82942"/>
    </conflict>
</comment>
<organism>
    <name type="scientific">Pseudomonas paraeruginosa (strain DSM 24068 / PA7)</name>
    <name type="common">Pseudomonas aeruginosa (strain PA7)</name>
    <dbReference type="NCBI Taxonomy" id="381754"/>
    <lineage>
        <taxon>Bacteria</taxon>
        <taxon>Pseudomonadati</taxon>
        <taxon>Pseudomonadota</taxon>
        <taxon>Gammaproteobacteria</taxon>
        <taxon>Pseudomonadales</taxon>
        <taxon>Pseudomonadaceae</taxon>
        <taxon>Pseudomonas</taxon>
        <taxon>Pseudomonas paraeruginosa</taxon>
    </lineage>
</organism>
<evidence type="ECO:0000255" key="1">
    <source>
        <dbReference type="HAMAP-Rule" id="MF_01302"/>
    </source>
</evidence>
<evidence type="ECO:0000305" key="2"/>
<feature type="chain" id="PRO_0000322021" description="Small ribosomal subunit protein uS8">
    <location>
        <begin position="1"/>
        <end position="130"/>
    </location>
</feature>
<name>RS8_PSEP7</name>